<gene>
    <name type="primary">gyrA</name>
</gene>
<protein>
    <recommendedName>
        <fullName>DNA gyrase subunit A</fullName>
        <ecNumber evidence="4">5.6.2.2</ecNumber>
    </recommendedName>
    <component>
        <recommendedName>
            <fullName>Mka GyrA intein</fullName>
        </recommendedName>
    </component>
</protein>
<accession>Q49608</accession>
<organism>
    <name type="scientific">Mycobacterium kansasii</name>
    <dbReference type="NCBI Taxonomy" id="1768"/>
    <lineage>
        <taxon>Bacteria</taxon>
        <taxon>Bacillati</taxon>
        <taxon>Actinomycetota</taxon>
        <taxon>Actinomycetes</taxon>
        <taxon>Mycobacteriales</taxon>
        <taxon>Mycobacteriaceae</taxon>
        <taxon>Mycobacterium</taxon>
    </lineage>
</organism>
<dbReference type="EC" id="5.6.2.2" evidence="4"/>
<dbReference type="EMBL" id="Z68207">
    <property type="protein sequence ID" value="CAA92431.1"/>
    <property type="molecule type" value="Genomic_DNA"/>
</dbReference>
<dbReference type="SMR" id="Q49608"/>
<dbReference type="STRING" id="1768.B1T50_14880"/>
<dbReference type="GO" id="GO:0005737">
    <property type="term" value="C:cytoplasm"/>
    <property type="evidence" value="ECO:0007669"/>
    <property type="project" value="UniProtKB-SubCell"/>
</dbReference>
<dbReference type="GO" id="GO:0009330">
    <property type="term" value="C:DNA topoisomerase type II (double strand cut, ATP-hydrolyzing) complex"/>
    <property type="evidence" value="ECO:0007669"/>
    <property type="project" value="TreeGrafter"/>
</dbReference>
<dbReference type="GO" id="GO:0005524">
    <property type="term" value="F:ATP binding"/>
    <property type="evidence" value="ECO:0007669"/>
    <property type="project" value="UniProtKB-KW"/>
</dbReference>
<dbReference type="GO" id="GO:0003677">
    <property type="term" value="F:DNA binding"/>
    <property type="evidence" value="ECO:0007669"/>
    <property type="project" value="UniProtKB-KW"/>
</dbReference>
<dbReference type="GO" id="GO:0034335">
    <property type="term" value="F:DNA negative supercoiling activity"/>
    <property type="evidence" value="ECO:0007669"/>
    <property type="project" value="UniProtKB-ARBA"/>
</dbReference>
<dbReference type="GO" id="GO:0004519">
    <property type="term" value="F:endonuclease activity"/>
    <property type="evidence" value="ECO:0007669"/>
    <property type="project" value="InterPro"/>
</dbReference>
<dbReference type="GO" id="GO:0006265">
    <property type="term" value="P:DNA topological change"/>
    <property type="evidence" value="ECO:0007669"/>
    <property type="project" value="InterPro"/>
</dbReference>
<dbReference type="GO" id="GO:0016539">
    <property type="term" value="P:intein-mediated protein splicing"/>
    <property type="evidence" value="ECO:0007669"/>
    <property type="project" value="InterPro"/>
</dbReference>
<dbReference type="CDD" id="cd00081">
    <property type="entry name" value="Hint"/>
    <property type="match status" value="1"/>
</dbReference>
<dbReference type="Gene3D" id="2.170.16.10">
    <property type="entry name" value="Hedgehog/Intein (Hint) domain"/>
    <property type="match status" value="2"/>
</dbReference>
<dbReference type="Gene3D" id="3.10.28.10">
    <property type="entry name" value="Homing endonucleases"/>
    <property type="match status" value="1"/>
</dbReference>
<dbReference type="Gene3D" id="3.90.199.10">
    <property type="entry name" value="Topoisomerase II, domain 5"/>
    <property type="match status" value="2"/>
</dbReference>
<dbReference type="InterPro" id="IPR003586">
    <property type="entry name" value="Hint_dom_C"/>
</dbReference>
<dbReference type="InterPro" id="IPR003587">
    <property type="entry name" value="Hint_dom_N"/>
</dbReference>
<dbReference type="InterPro" id="IPR036844">
    <property type="entry name" value="Hint_dom_sf"/>
</dbReference>
<dbReference type="InterPro" id="IPR027434">
    <property type="entry name" value="Homing_endonucl"/>
</dbReference>
<dbReference type="InterPro" id="IPR006142">
    <property type="entry name" value="INTEIN"/>
</dbReference>
<dbReference type="InterPro" id="IPR030934">
    <property type="entry name" value="Intein_C"/>
</dbReference>
<dbReference type="InterPro" id="IPR004042">
    <property type="entry name" value="Intein_endonuc_central"/>
</dbReference>
<dbReference type="InterPro" id="IPR006141">
    <property type="entry name" value="Intein_N"/>
</dbReference>
<dbReference type="InterPro" id="IPR004860">
    <property type="entry name" value="LAGLIDADG_dom"/>
</dbReference>
<dbReference type="InterPro" id="IPR013760">
    <property type="entry name" value="Topo_IIA-like_dom_sf"/>
</dbReference>
<dbReference type="InterPro" id="IPR013758">
    <property type="entry name" value="Topo_IIA_A/C_ab"/>
</dbReference>
<dbReference type="InterPro" id="IPR002205">
    <property type="entry name" value="Topo_IIA_dom_A"/>
</dbReference>
<dbReference type="InterPro" id="IPR050220">
    <property type="entry name" value="Type_II_DNA_Topoisomerases"/>
</dbReference>
<dbReference type="NCBIfam" id="TIGR01443">
    <property type="entry name" value="intein_Cterm"/>
    <property type="match status" value="1"/>
</dbReference>
<dbReference type="NCBIfam" id="TIGR01445">
    <property type="entry name" value="intein_Nterm"/>
    <property type="match status" value="1"/>
</dbReference>
<dbReference type="PANTHER" id="PTHR43493:SF5">
    <property type="entry name" value="DNA GYRASE SUBUNIT A, CHLOROPLASTIC_MITOCHONDRIAL"/>
    <property type="match status" value="1"/>
</dbReference>
<dbReference type="PANTHER" id="PTHR43493">
    <property type="entry name" value="DNA GYRASE/TOPOISOMERASE SUBUNIT A"/>
    <property type="match status" value="1"/>
</dbReference>
<dbReference type="Pfam" id="PF00521">
    <property type="entry name" value="DNA_topoisoIV"/>
    <property type="match status" value="2"/>
</dbReference>
<dbReference type="Pfam" id="PF14528">
    <property type="entry name" value="LAGLIDADG_3"/>
    <property type="match status" value="1"/>
</dbReference>
<dbReference type="PRINTS" id="PR00379">
    <property type="entry name" value="INTEIN"/>
</dbReference>
<dbReference type="SMART" id="SM00305">
    <property type="entry name" value="HintC"/>
    <property type="match status" value="1"/>
</dbReference>
<dbReference type="SMART" id="SM00306">
    <property type="entry name" value="HintN"/>
    <property type="match status" value="1"/>
</dbReference>
<dbReference type="SMART" id="SM00434">
    <property type="entry name" value="TOP4c"/>
    <property type="match status" value="1"/>
</dbReference>
<dbReference type="SUPFAM" id="SSF51294">
    <property type="entry name" value="Hedgehog/intein (Hint) domain"/>
    <property type="match status" value="1"/>
</dbReference>
<dbReference type="SUPFAM" id="SSF55608">
    <property type="entry name" value="Homing endonucleases"/>
    <property type="match status" value="1"/>
</dbReference>
<dbReference type="SUPFAM" id="SSF56719">
    <property type="entry name" value="Type II DNA topoisomerase"/>
    <property type="match status" value="2"/>
</dbReference>
<dbReference type="PROSITE" id="PS50818">
    <property type="entry name" value="INTEIN_C_TER"/>
    <property type="match status" value="1"/>
</dbReference>
<dbReference type="PROSITE" id="PS50819">
    <property type="entry name" value="INTEIN_ENDONUCLEASE"/>
    <property type="match status" value="1"/>
</dbReference>
<dbReference type="PROSITE" id="PS50817">
    <property type="entry name" value="INTEIN_N_TER"/>
    <property type="match status" value="1"/>
</dbReference>
<dbReference type="PROSITE" id="PS52040">
    <property type="entry name" value="TOPO_IIA"/>
    <property type="match status" value="1"/>
</dbReference>
<evidence type="ECO:0000250" key="1"/>
<evidence type="ECO:0000250" key="2">
    <source>
        <dbReference type="UniProtKB" id="P0AES4"/>
    </source>
</evidence>
<evidence type="ECO:0000255" key="3">
    <source>
        <dbReference type="PROSITE-ProRule" id="PRU00273"/>
    </source>
</evidence>
<evidence type="ECO:0000255" key="4">
    <source>
        <dbReference type="PROSITE-ProRule" id="PRU01384"/>
    </source>
</evidence>
<reference key="1">
    <citation type="journal article" date="1996" name="Proc. Natl. Acad. Sci. U.S.A.">
        <title>Homing events in the gyrA gene of some mycobacteria.</title>
        <authorList>
            <person name="Fsihi H."/>
            <person name="Vincent V."/>
            <person name="Cole S.T."/>
        </authorList>
    </citation>
    <scope>NUCLEOTIDE SEQUENCE [GENOMIC DNA]</scope>
    <source>
        <strain>KANS0 / 930908</strain>
    </source>
</reference>
<keyword id="KW-0067">ATP-binding</keyword>
<keyword id="KW-0068">Autocatalytic cleavage</keyword>
<keyword id="KW-0963">Cytoplasm</keyword>
<keyword id="KW-0238">DNA-binding</keyword>
<keyword id="KW-0413">Isomerase</keyword>
<keyword id="KW-0547">Nucleotide-binding</keyword>
<keyword id="KW-0651">Protein splicing</keyword>
<keyword id="KW-0799">Topoisomerase</keyword>
<name>GYRA_MYCKA</name>
<comment type="function">
    <text evidence="2">A type II topoisomerase that negatively supercoils closed circular double-stranded (ds) DNA in an ATP-dependent manner to modulate DNA topology and maintain chromosomes in an underwound state. Negative supercoiling favors strand separation, and DNA replication, transcription, recombination and repair, all of which involve strand separation. Also able to catalyze the interconversion of other topological isomers of dsDNA rings, including catenanes and knotted rings. Type II topoisomerases break and join 2 DNA strands simultaneously in an ATP-dependent manner.</text>
</comment>
<comment type="catalytic activity">
    <reaction evidence="4">
        <text>ATP-dependent breakage, passage and rejoining of double-stranded DNA.</text>
        <dbReference type="EC" id="5.6.2.2"/>
    </reaction>
</comment>
<comment type="subunit">
    <text evidence="2">Heterotetramer, composed of two GyrA and two GyrB chains. In the heterotetramer, GyrA contains the active site tyrosine that forms a transient covalent intermediate with DNA, while GyrB binds cofactors and catalyzes ATP hydrolysis.</text>
</comment>
<comment type="subcellular location">
    <subcellularLocation>
        <location evidence="2">Cytoplasm</location>
    </subcellularLocation>
</comment>
<comment type="PTM">
    <text evidence="1">This protein undergoes a protein self splicing that involves a post-translational excision of the intervening region (intein) followed by peptide ligation.</text>
</comment>
<comment type="miscellaneous">
    <text evidence="2">Few gyrases are as efficient as E.coli at forming negative supercoils. Not all organisms have 2 type II topoisomerases; in organisms with a single type II topoisomerase this enzyme also has to decatenate newly replicated chromosomes.</text>
</comment>
<comment type="similarity">
    <text>Belongs to the type II topoisomerase GyrA/ParC subunit family.</text>
</comment>
<feature type="chain" id="PRO_0000034804" description="DNA gyrase subunit A, 1st part" evidence="2">
    <location>
        <begin position="1" status="less than"/>
        <end position="65"/>
    </location>
</feature>
<feature type="chain" id="PRO_0000034805" description="Mka GyrA intein" evidence="1">
    <location>
        <begin position="66"/>
        <end position="485"/>
    </location>
</feature>
<feature type="chain" id="PRO_0000034806" description="DNA gyrase subunit A, 2nd part" evidence="1">
    <location>
        <begin position="486"/>
        <end position="549" status="greater than"/>
    </location>
</feature>
<feature type="domain" description="Topo IIA-type catalytic" evidence="4">
    <location>
        <begin position="1"/>
        <end position="549"/>
    </location>
</feature>
<feature type="domain" description="DOD-type homing endonuclease" evidence="3">
    <location>
        <begin position="191"/>
        <end position="331"/>
    </location>
</feature>
<feature type="active site" description="O-(5'-phospho-DNA)-tyrosine intermediate" evidence="4">
    <location>
        <position position="65"/>
    </location>
</feature>
<feature type="non-terminal residue">
    <location>
        <position position="1"/>
    </location>
</feature>
<feature type="non-terminal residue">
    <location>
        <position position="549"/>
    </location>
</feature>
<proteinExistence type="inferred from homology"/>
<sequence>RPARSHAKSARSVAETMGNYHPHGDASIYDTLVRMAQPWSLRYPLVDGQGNFGSPGNVPPAAMRYCVTGDALVRLPFGQSMRIADVVPGARPNSDNAVELKVLDRHGNPVAADRLFHSGDHQTYMVRTAEGYEVTGTANHPLLCLVDVGGVPTLLWKLIEEIHPDDYVALQRTPPMELGPADWHDTMEALLLGAFISEGCVSETRAGFANLDRDYFTMVARAYDAVVGDKRDVYQQTIASGSLQHTLYTQNVTALKQSRLWQILGMRSADTYVPEWMWHSPAAVKRVFLQALFEGDGSCSRRPHNTIQISYNTVSKQLAMDVQQMLLEFGVISRRYLHAAGEYKVVITDRAQAELFPKQIGFGGAKQTELSKILAAMPPCAGRDSDHVPGLARFIRRHCDSRWVDKEWLHKHNIDHLSRWRRDGAEILSHIADPDVRTIATDLTDGRFYYARVASVTDTGVQPVYSLRVDTDDHAFLTNGFVSHNTEARLTPLAMEMLREIDEETVDFIPNYDGRVQEPTVLPSRFPNLLANGSGGIAVGMATNIPPHN</sequence>